<accession>O56264</accession>
<accession>Q77XR5</accession>
<evidence type="ECO:0000255" key="1">
    <source>
        <dbReference type="HAMAP-Rule" id="MF_04066"/>
    </source>
</evidence>
<evidence type="ECO:0000256" key="2">
    <source>
        <dbReference type="SAM" id="MobiDB-lite"/>
    </source>
</evidence>
<keyword id="KW-0025">Alternative splicing</keyword>
<keyword id="KW-1262">Eukaryotic host gene expression shutoff by virus</keyword>
<keyword id="KW-1035">Host cytoplasm</keyword>
<keyword id="KW-1190">Host gene expression shutoff by virus</keyword>
<keyword id="KW-1192">Host mRNA suppression by virus</keyword>
<keyword id="KW-1048">Host nucleus</keyword>
<keyword id="KW-0945">Host-virus interaction</keyword>
<keyword id="KW-1090">Inhibition of host innate immune response by virus</keyword>
<keyword id="KW-1114">Inhibition of host interferon signaling pathway by virus</keyword>
<keyword id="KW-1102">Inhibition of host PKR by virus</keyword>
<keyword id="KW-1103">Inhibition of host pre-mRNA processing by virus</keyword>
<keyword id="KW-1088">Inhibition of host RIG-I by virus</keyword>
<keyword id="KW-1113">Inhibition of host RLR pathway by virus</keyword>
<keyword id="KW-0922">Interferon antiviral system evasion</keyword>
<keyword id="KW-0694">RNA-binding</keyword>
<keyword id="KW-0832">Ubl conjugation</keyword>
<keyword id="KW-0899">Viral immunoevasion</keyword>
<reference key="1">
    <citation type="journal article" date="1998" name="Science">
        <title>Characterization of an avian influenza A (H5N1) virus isolated from a child with a fatal respiratory illness.</title>
        <authorList>
            <person name="Subbarao K."/>
            <person name="Klimov A."/>
            <person name="Katz J."/>
            <person name="Regnery H."/>
            <person name="Lim W."/>
            <person name="Hall H."/>
            <person name="Perdue M."/>
            <person name="Swayne D."/>
            <person name="Bender C."/>
            <person name="Huang J."/>
            <person name="Hemphill M."/>
            <person name="Rowe T."/>
            <person name="Shaw M."/>
            <person name="Xu X."/>
            <person name="Fukuda K."/>
            <person name="Cox N."/>
        </authorList>
    </citation>
    <scope>NUCLEOTIDE SEQUENCE [GENOMIC RNA]</scope>
</reference>
<reference key="2">
    <citation type="journal article" date="2000" name="Proc. Natl. Acad. Sci. U.S.A.">
        <title>Avian-to-human transmission of H9N2 subtype influenza A viruses: relationship between H9N2 and H5N1 human isolates.</title>
        <authorList>
            <person name="Lin Y.P."/>
            <person name="Shaw M."/>
            <person name="Gregory V."/>
            <person name="Cameron K."/>
            <person name="Lim W."/>
            <person name="Klimov A."/>
            <person name="Subbarao K."/>
            <person name="Guan Y."/>
            <person name="Krauss S."/>
            <person name="Shortridge K."/>
            <person name="Webster R."/>
            <person name="Cox N."/>
            <person name="Hay A."/>
        </authorList>
    </citation>
    <scope>NUCLEOTIDE SEQUENCE [GENOMIC RNA]</scope>
    <source>
        <strain>A/Hong Kong/1074/99</strain>
    </source>
</reference>
<reference key="3">
    <citation type="journal article" date="1998" name="J. Virol.">
        <title>Comparisons of highly virulent H5N1 influenza A viruses isolated from humans and chickens from Hong Kong.</title>
        <authorList>
            <person name="Suarez D.L."/>
            <person name="Perdue M.L."/>
            <person name="Cox N."/>
            <person name="Rowe T."/>
            <person name="Bender C."/>
            <person name="Huang J."/>
            <person name="Swayne D.E."/>
        </authorList>
    </citation>
    <scope>NUCLEOTIDE SEQUENCE [GENOMIC RNA]</scope>
</reference>
<reference key="4">
    <citation type="journal article" date="2003" name="Virology">
        <title>Intracellular warfare between human influenza viruses and human cells: the roles of the viral NS1 protein.</title>
        <authorList>
            <person name="Krug R.M."/>
            <person name="Yuan W."/>
            <person name="Noah D.L."/>
            <person name="Latham A.G."/>
        </authorList>
    </citation>
    <scope>REVIEW</scope>
</reference>
<gene>
    <name evidence="1" type="primary">NS</name>
</gene>
<proteinExistence type="inferred from homology"/>
<sequence>MDSNTVSSFQVDCFLWHVRKRFADQELGDAPFLDRLRRDQKSLRGRGSTLGLDIRTATREGKHIVERILEEESDEALKMTIASVPAPRYLTEMTLEEMSRDWLMLIPKQKVTGSLCIRMDQAIMDKDIILKANFSVIFNRLEALILLRAFTDEGAIVGEISPLPSLPGHTEEDVKNAIGVLIGGLEWNDNTVRVSETLQRFTWRSSDENGRSPLPPKQKRKMERTIEPEV</sequence>
<organismHost>
    <name type="scientific">Aves</name>
    <dbReference type="NCBI Taxonomy" id="8782"/>
</organismHost>
<organismHost>
    <name type="scientific">Felis catus</name>
    <name type="common">Cat</name>
    <name type="synonym">Felis silvestris catus</name>
    <dbReference type="NCBI Taxonomy" id="9685"/>
</organismHost>
<organismHost>
    <name type="scientific">Homo sapiens</name>
    <name type="common">Human</name>
    <dbReference type="NCBI Taxonomy" id="9606"/>
</organismHost>
<organismHost>
    <name type="scientific">Panthera pardus</name>
    <name type="common">Leopard</name>
    <name type="synonym">Felis pardus</name>
    <dbReference type="NCBI Taxonomy" id="9691"/>
</organismHost>
<organismHost>
    <name type="scientific">Panthera tigris</name>
    <name type="common">Tiger</name>
    <dbReference type="NCBI Taxonomy" id="9694"/>
</organismHost>
<organismHost>
    <name type="scientific">Sus scrofa</name>
    <name type="common">Pig</name>
    <dbReference type="NCBI Taxonomy" id="9823"/>
</organismHost>
<comment type="function">
    <text evidence="1">Inhibits post-transcriptional processing of cellular pre-mRNA, by binding and inhibiting two cellular proteins that are required for the 3'-end processing of cellular pre-mRNAs: the 30 kDa cleavage and polyadenylation specificity factor/CPSF4 and the poly(A)-binding protein 2/PABPN1. In turn, unprocessed 3' end pre-mRNAs accumulate in the host nucleus and are no longer exported to the cytoplasm. Cellular protein synthesis is thereby shut off very early after virus infection. Viral protein synthesis is not affected by the inhibition of the cellular 3' end processing machinery because the poly(A) tails of viral mRNAs are produced by the viral polymerase through a stuttering mechanism. Prevents the establishment of the cellular antiviral state by inhibiting TRIM25-mediated RIGI ubiquitination, which normally triggers the antiviral transduction signal that leads to the activation of type I IFN genes by transcription factors IRF3 and IRF7. Also binds poly(A) and U6 snRNA. Inhibits the integrated stress response (ISR) in the infected cell by blocking dsRNA binding by EIF2AK2/PKR and further phosphorylation of EIF2S1/EIF-2ALPHA. Stress granule formation is thus inhibited, which allows protein synthesis and viral replication.</text>
</comment>
<comment type="subunit">
    <text evidence="1">Homodimer. Interacts with host TRIM25 (via coiled coil); this interaction specifically inhibits TRIM25 multimerization and TRIM25-mediated RIGI CARD ubiquitination. Interacts with human EIF2AK2/PKR, CPSF4, IVNS1ABP and PABPN1.</text>
</comment>
<comment type="subcellular location">
    <subcellularLocation>
        <location evidence="1">Host nucleus</location>
    </subcellularLocation>
    <subcellularLocation>
        <location evidence="1">Host cytoplasm</location>
    </subcellularLocation>
    <text evidence="1">In uninfected, transfected cells, NS1 is localized in the nucleus. Only in virus infected cells, the nuclear export signal is unveiled, presumably by a viral protein, and a fraction of NS1 is exported in the cytoplasm.</text>
</comment>
<comment type="alternative products">
    <event type="alternative splicing"/>
    <isoform>
        <id>O56264-1</id>
        <name>NS1</name>
        <sequence type="displayed"/>
    </isoform>
    <isoform>
        <id>O56263-1</id>
        <name>NEP</name>
        <name>NS2</name>
        <sequence type="external"/>
    </isoform>
</comment>
<comment type="domain">
    <text evidence="1">The dsRNA-binding region is required for suppression of RNA silencing.</text>
</comment>
<comment type="PTM">
    <text evidence="1">Upon interferon induction, ISGylated via host HERC5; this results in the impairment of NS1 interaction with RNA targets due to its inability to form homodimers and to interact with host EIF2AK2/PKR.</text>
</comment>
<comment type="similarity">
    <text evidence="1">Belongs to the influenza A viruses NS1 family.</text>
</comment>
<dbReference type="EMBL" id="AF036360">
    <property type="protein sequence ID" value="AAC34268.1"/>
    <property type="molecule type" value="Genomic_RNA"/>
</dbReference>
<dbReference type="EMBL" id="AJ404736">
    <property type="protein sequence ID" value="CAC04091.1"/>
    <property type="molecule type" value="Genomic_RNA"/>
</dbReference>
<dbReference type="EMBL" id="AF046091">
    <property type="protein sequence ID" value="AAC32092.1"/>
    <property type="molecule type" value="Genomic_RNA"/>
</dbReference>
<dbReference type="SMR" id="O56264"/>
<dbReference type="IntAct" id="O56264">
    <property type="interactions" value="108"/>
</dbReference>
<dbReference type="Proteomes" id="UP000008587">
    <property type="component" value="Genome"/>
</dbReference>
<dbReference type="GO" id="GO:0030430">
    <property type="term" value="C:host cell cytoplasm"/>
    <property type="evidence" value="ECO:0007669"/>
    <property type="project" value="UniProtKB-SubCell"/>
</dbReference>
<dbReference type="GO" id="GO:0042025">
    <property type="term" value="C:host cell nucleus"/>
    <property type="evidence" value="ECO:0007669"/>
    <property type="project" value="UniProtKB-SubCell"/>
</dbReference>
<dbReference type="GO" id="GO:0030291">
    <property type="term" value="F:protein serine/threonine kinase inhibitor activity"/>
    <property type="evidence" value="ECO:0007669"/>
    <property type="project" value="UniProtKB-KW"/>
</dbReference>
<dbReference type="GO" id="GO:0003723">
    <property type="term" value="F:RNA binding"/>
    <property type="evidence" value="ECO:0007669"/>
    <property type="project" value="UniProtKB-KW"/>
</dbReference>
<dbReference type="GO" id="GO:0039540">
    <property type="term" value="P:symbiont-mediated suppression of host cytoplasmic pattern recognition receptor signaling pathway via inhibition of RIG-I activity"/>
    <property type="evidence" value="ECO:0007669"/>
    <property type="project" value="UniProtKB-KW"/>
</dbReference>
<dbReference type="GO" id="GO:0039657">
    <property type="term" value="P:symbiont-mediated suppression of host gene expression"/>
    <property type="evidence" value="ECO:0007669"/>
    <property type="project" value="UniProtKB-KW"/>
</dbReference>
<dbReference type="GO" id="GO:0039524">
    <property type="term" value="P:symbiont-mediated suppression of host mRNA processing"/>
    <property type="evidence" value="ECO:0007669"/>
    <property type="project" value="UniProtKB-KW"/>
</dbReference>
<dbReference type="GO" id="GO:0039580">
    <property type="term" value="P:symbiont-mediated suppression of host PKR/eIFalpha signaling"/>
    <property type="evidence" value="ECO:0007669"/>
    <property type="project" value="UniProtKB-KW"/>
</dbReference>
<dbReference type="GO" id="GO:0039502">
    <property type="term" value="P:symbiont-mediated suppression of host type I interferon-mediated signaling pathway"/>
    <property type="evidence" value="ECO:0007669"/>
    <property type="project" value="UniProtKB-KW"/>
</dbReference>
<dbReference type="FunFam" id="1.10.287.10:FF:000001">
    <property type="entry name" value="Non-structural protein 1"/>
    <property type="match status" value="1"/>
</dbReference>
<dbReference type="FunFam" id="3.30.420.330:FF:000001">
    <property type="entry name" value="Non-structural protein 1"/>
    <property type="match status" value="1"/>
</dbReference>
<dbReference type="Gene3D" id="3.30.420.330">
    <property type="entry name" value="Influenza virus non-structural protein, effector domain"/>
    <property type="match status" value="1"/>
</dbReference>
<dbReference type="Gene3D" id="1.10.287.10">
    <property type="entry name" value="S15/NS1, RNA-binding"/>
    <property type="match status" value="1"/>
</dbReference>
<dbReference type="HAMAP" id="MF_04066">
    <property type="entry name" value="INFV_NS1"/>
    <property type="match status" value="1"/>
</dbReference>
<dbReference type="InterPro" id="IPR004208">
    <property type="entry name" value="NS1"/>
</dbReference>
<dbReference type="InterPro" id="IPR000256">
    <property type="entry name" value="NS1A"/>
</dbReference>
<dbReference type="InterPro" id="IPR038064">
    <property type="entry name" value="NS1A_effect_dom-like_sf"/>
</dbReference>
<dbReference type="InterPro" id="IPR009068">
    <property type="entry name" value="uS15_NS1_RNA-bd_sf"/>
</dbReference>
<dbReference type="Pfam" id="PF00600">
    <property type="entry name" value="Flu_NS1"/>
    <property type="match status" value="1"/>
</dbReference>
<dbReference type="SUPFAM" id="SSF143021">
    <property type="entry name" value="Ns1 effector domain-like"/>
    <property type="match status" value="1"/>
</dbReference>
<dbReference type="SUPFAM" id="SSF47060">
    <property type="entry name" value="S15/NS1 RNA-binding domain"/>
    <property type="match status" value="1"/>
</dbReference>
<organism>
    <name type="scientific">Influenza A virus (strain A/Hong Kong/156/1997 H5N1 genotype Gs/Gd)</name>
    <dbReference type="NCBI Taxonomy" id="130763"/>
    <lineage>
        <taxon>Viruses</taxon>
        <taxon>Riboviria</taxon>
        <taxon>Orthornavirae</taxon>
        <taxon>Negarnaviricota</taxon>
        <taxon>Polyploviricotina</taxon>
        <taxon>Insthoviricetes</taxon>
        <taxon>Articulavirales</taxon>
        <taxon>Orthomyxoviridae</taxon>
        <taxon>Alphainfluenzavirus</taxon>
        <taxon>Alphainfluenzavirus influenzae</taxon>
        <taxon>Influenza A virus</taxon>
    </lineage>
</organism>
<feature type="chain" id="PRO_0000078931" description="Non-structural protein 1">
    <location>
        <begin position="1"/>
        <end position="230"/>
    </location>
</feature>
<feature type="region of interest" description="RNA-binding and homodimerization" evidence="1">
    <location>
        <begin position="1"/>
        <end position="73"/>
    </location>
</feature>
<feature type="region of interest" description="CPSF4-binding" evidence="1">
    <location>
        <begin position="180"/>
        <end position="215"/>
    </location>
</feature>
<feature type="region of interest" description="Disordered" evidence="2">
    <location>
        <begin position="204"/>
        <end position="230"/>
    </location>
</feature>
<feature type="region of interest" description="PABPN1-binding" evidence="1">
    <location>
        <begin position="223"/>
        <end position="230"/>
    </location>
</feature>
<feature type="short sequence motif" description="Nuclear localization signal" evidence="1">
    <location>
        <begin position="34"/>
        <end position="38"/>
    </location>
</feature>
<feature type="short sequence motif" description="Nuclear export signal" evidence="1">
    <location>
        <begin position="137"/>
        <end position="146"/>
    </location>
</feature>
<name>NS1_I97A1</name>
<protein>
    <recommendedName>
        <fullName evidence="1">Non-structural protein 1</fullName>
        <shortName evidence="1">NS1</shortName>
    </recommendedName>
    <alternativeName>
        <fullName evidence="1">NS1A</fullName>
    </alternativeName>
</protein>